<protein>
    <recommendedName>
        <fullName>6-phosphogluconolactonase 3</fullName>
        <shortName>6PGL</shortName>
        <ecNumber>3.1.1.31</ecNumber>
    </recommendedName>
</protein>
<reference key="1">
    <citation type="journal article" date="2007" name="Proc. Natl. Acad. Sci. U.S.A.">
        <title>Genome sequencing and comparative analysis of Saccharomyces cerevisiae strain YJM789.</title>
        <authorList>
            <person name="Wei W."/>
            <person name="McCusker J.H."/>
            <person name="Hyman R.W."/>
            <person name="Jones T."/>
            <person name="Ning Y."/>
            <person name="Cao Z."/>
            <person name="Gu Z."/>
            <person name="Bruno D."/>
            <person name="Miranda M."/>
            <person name="Nguyen M."/>
            <person name="Wilhelmy J."/>
            <person name="Komp C."/>
            <person name="Tamse R."/>
            <person name="Wang X."/>
            <person name="Jia P."/>
            <person name="Luedi P."/>
            <person name="Oefner P.J."/>
            <person name="David L."/>
            <person name="Dietrich F.S."/>
            <person name="Li Y."/>
            <person name="Davis R.W."/>
            <person name="Steinmetz L.M."/>
        </authorList>
    </citation>
    <scope>NUCLEOTIDE SEQUENCE [LARGE SCALE GENOMIC DNA]</scope>
    <source>
        <strain>YJM789</strain>
    </source>
</reference>
<comment type="function">
    <text evidence="1">Hydrolysis of 6-phosphogluconolactone to 6-phosphogluconate.</text>
</comment>
<comment type="catalytic activity">
    <reaction>
        <text>6-phospho-D-glucono-1,5-lactone + H2O = 6-phospho-D-gluconate + H(+)</text>
        <dbReference type="Rhea" id="RHEA:12556"/>
        <dbReference type="ChEBI" id="CHEBI:15377"/>
        <dbReference type="ChEBI" id="CHEBI:15378"/>
        <dbReference type="ChEBI" id="CHEBI:57955"/>
        <dbReference type="ChEBI" id="CHEBI:58759"/>
        <dbReference type="EC" id="3.1.1.31"/>
    </reaction>
</comment>
<comment type="pathway">
    <text>Carbohydrate degradation; pentose phosphate pathway; D-ribulose 5-phosphate from D-glucose 6-phosphate (oxidative stage): step 2/3.</text>
</comment>
<comment type="subcellular location">
    <subcellularLocation>
        <location evidence="1">Cytoplasm</location>
    </subcellularLocation>
    <subcellularLocation>
        <location evidence="1">Nucleus</location>
    </subcellularLocation>
</comment>
<comment type="similarity">
    <text evidence="2">Belongs to the glucosamine/galactosamine-6-phosphate isomerase family. 6-phosphogluconolactonase subfamily.</text>
</comment>
<keyword id="KW-0963">Cytoplasm</keyword>
<keyword id="KW-0378">Hydrolase</keyword>
<keyword id="KW-0539">Nucleus</keyword>
<dbReference type="EC" id="3.1.1.31"/>
<dbReference type="EMBL" id="AAFW02000082">
    <property type="protein sequence ID" value="EDN62402.1"/>
    <property type="molecule type" value="Genomic_DNA"/>
</dbReference>
<dbReference type="SMR" id="A6ZT71"/>
<dbReference type="HOGENOM" id="CLU_053947_0_1_1"/>
<dbReference type="UniPathway" id="UPA00115">
    <property type="reaction ID" value="UER00409"/>
</dbReference>
<dbReference type="Proteomes" id="UP000007060">
    <property type="component" value="Unassembled WGS sequence"/>
</dbReference>
<dbReference type="GO" id="GO:0005737">
    <property type="term" value="C:cytoplasm"/>
    <property type="evidence" value="ECO:0007669"/>
    <property type="project" value="UniProtKB-SubCell"/>
</dbReference>
<dbReference type="GO" id="GO:0005634">
    <property type="term" value="C:nucleus"/>
    <property type="evidence" value="ECO:0007669"/>
    <property type="project" value="UniProtKB-SubCell"/>
</dbReference>
<dbReference type="GO" id="GO:0017057">
    <property type="term" value="F:6-phosphogluconolactonase activity"/>
    <property type="evidence" value="ECO:0007669"/>
    <property type="project" value="UniProtKB-EC"/>
</dbReference>
<dbReference type="GO" id="GO:0005975">
    <property type="term" value="P:carbohydrate metabolic process"/>
    <property type="evidence" value="ECO:0007669"/>
    <property type="project" value="InterPro"/>
</dbReference>
<dbReference type="GO" id="GO:0006098">
    <property type="term" value="P:pentose-phosphate shunt"/>
    <property type="evidence" value="ECO:0007669"/>
    <property type="project" value="UniProtKB-UniPathway"/>
</dbReference>
<dbReference type="CDD" id="cd01400">
    <property type="entry name" value="6PGL"/>
    <property type="match status" value="1"/>
</dbReference>
<dbReference type="FunFam" id="3.40.50.1360:FF:000005">
    <property type="entry name" value="6-phosphogluconolactonase"/>
    <property type="match status" value="1"/>
</dbReference>
<dbReference type="Gene3D" id="3.40.50.1360">
    <property type="match status" value="1"/>
</dbReference>
<dbReference type="InterPro" id="IPR005900">
    <property type="entry name" value="6-phosphogluconolactonase_DevB"/>
</dbReference>
<dbReference type="InterPro" id="IPR006148">
    <property type="entry name" value="Glc/Gal-6P_isomerase"/>
</dbReference>
<dbReference type="InterPro" id="IPR037171">
    <property type="entry name" value="NagB/RpiA_transferase-like"/>
</dbReference>
<dbReference type="InterPro" id="IPR039104">
    <property type="entry name" value="PGLS"/>
</dbReference>
<dbReference type="NCBIfam" id="TIGR01198">
    <property type="entry name" value="pgl"/>
    <property type="match status" value="1"/>
</dbReference>
<dbReference type="PANTHER" id="PTHR11054">
    <property type="entry name" value="6-PHOSPHOGLUCONOLACTONASE"/>
    <property type="match status" value="1"/>
</dbReference>
<dbReference type="PANTHER" id="PTHR11054:SF24">
    <property type="entry name" value="6-PHOSPHOGLUCONOLACTONASE 3-RELATED"/>
    <property type="match status" value="1"/>
</dbReference>
<dbReference type="Pfam" id="PF01182">
    <property type="entry name" value="Glucosamine_iso"/>
    <property type="match status" value="1"/>
</dbReference>
<dbReference type="SUPFAM" id="SSF100950">
    <property type="entry name" value="NagB/RpiA/CoA transferase-like"/>
    <property type="match status" value="1"/>
</dbReference>
<evidence type="ECO:0000250" key="1"/>
<evidence type="ECO:0000305" key="2"/>
<accession>A6ZT71</accession>
<sequence length="249" mass="27784">MVTVGVFSERASLTHQLGEFIVKKQDEALQKKSDFKVSVSGGSLIDALYESLVADESLSSRVQWSKWQIYFSDERIVPLTDADSNYGAFKRAVLDKLPSTSQPNVYPMDESLIGSDAESNNKIAAEYERIVPQVLDLVLLGCGPDGHTCSLFPGETHRYLLNETTKRVAWCHDSPKPPSDRITFTLPVLKDAKALCFVAEGSSKQNIMHEIFDLKNDQLPTALVNKLFGEKTSWFVNEEAFGKVQTKTF</sequence>
<gene>
    <name type="primary">SOL3</name>
    <name type="ORF">SCY_2555</name>
</gene>
<organism>
    <name type="scientific">Saccharomyces cerevisiae (strain YJM789)</name>
    <name type="common">Baker's yeast</name>
    <dbReference type="NCBI Taxonomy" id="307796"/>
    <lineage>
        <taxon>Eukaryota</taxon>
        <taxon>Fungi</taxon>
        <taxon>Dikarya</taxon>
        <taxon>Ascomycota</taxon>
        <taxon>Saccharomycotina</taxon>
        <taxon>Saccharomycetes</taxon>
        <taxon>Saccharomycetales</taxon>
        <taxon>Saccharomycetaceae</taxon>
        <taxon>Saccharomyces</taxon>
    </lineage>
</organism>
<feature type="chain" id="PRO_0000377636" description="6-phosphogluconolactonase 3">
    <location>
        <begin position="1"/>
        <end position="249"/>
    </location>
</feature>
<proteinExistence type="inferred from homology"/>
<name>SOL3_YEAS7</name>